<gene>
    <name type="primary">abcC15</name>
    <name type="ORF">DDB_G0280459</name>
</gene>
<keyword id="KW-0067">ATP-binding</keyword>
<keyword id="KW-0472">Membrane</keyword>
<keyword id="KW-0547">Nucleotide-binding</keyword>
<keyword id="KW-1185">Reference proteome</keyword>
<keyword id="KW-0677">Repeat</keyword>
<keyword id="KW-0812">Transmembrane</keyword>
<keyword id="KW-1133">Transmembrane helix</keyword>
<keyword id="KW-0813">Transport</keyword>
<sequence length="1436" mass="164683">MIKKIKNIINKIINFFSTIYILCKIYLYYNIKNRYEAYNILSVYGDDDFFNKPCPEDSSNWKDKLTFKWVERIIFVGFFRAPLNLNDISDLPSSLKVENTAPLLKDIIFNDSTIPLIKHIYSKFLPRNYIATGLFVFVSVFSFITPLILKNFLSYVEKIDEQKHIYIGIIQCFLLFLSSFINMASQQYSYWFGFKTSLEVKGALETIIFEKMTKLSNLSKKNYNIGSMLNLMSVDTDFFQYFFCHYYIEIFLFPIQILSLLGFLIYVIGIAGFVGFLVMLITIPLSSFLGTQISKNLSTSMGYADTRISLTGELINGIKFLKQYAWEKMFCERIEEQRKLQLKYLYIRIIYWVLVQIVTQASSGLVLVSTFTTYTLLGYEVSLEIAFTSITILQNLRRPIESLPDCLHKFISLIASAKRIETFLQSSELQNQPFIHNQSGLNDILIRNINFNWNEHNLKLKNNKNNQNNNQNKRSIILSSGEQFEITNDFTFDGIDIQDDNYDYEKEYKINYNNNEEEENFMTDCLLKIKPLIKDRRLQQQQADYQDLLSINLPPPPSENVDFKAPKGLLTIISGGVRSGKTSLASGLLGEICKAVDKSSPDSVNSILSTIQQPFLQSTSFRENILFGKPMNMERYIKVIEACCLAPDLLAMGEGKDLTEIGERGINLSNGLKHRIQLARALYADSDCYILDEILSSVDPEIANYIFQHCIKGMMKGKTVILVTHQIQFISSADHVVVVDNGVLIQGTYLELLRMGIDFEMILKEKENRIEKQIVQLQEDEDYYEEVEILDFTMNNNNNNNNNNNNNNSNFNGNNKLKRSSISLPKGISIESIISKDFDQTTIEKAKLFVQEDRNKGDPGWIIYKKYIRMGSSISFFIFTCIIYLTSQIILLLSDYWLQSWASHDRLNVSEPTDVHYLLIYLAYIGGFVFTLGVRYLLIAKITFGSAETLHRSLLKSIIRAPLTFFEQNPVGRILNRFGKDISDIDILLLDCFSDVLYCGACLVTSIGIIIYISPYIAIPFVILIAINYIFQLFYNYSVLELKRIQSISRSPVYSLLSEVYNGLTTIRSFGQQERFFNMMKDNININLRVFFYNFAVSRWIGIRVEFLSAIVVLMSALFSIFNDNPGLSALGVTTALGITFNLNWFMRQFGELESRINSVERVQSYISIPKEKETNEDEFIQTGFIWPSRGEIEFKNVEIRYRPNSIATLRNFSMKINAQERIGIIGRSGSGKSTIGMSLFRMIECSSGSILIDGDDISQIDLKRLRSSIGIVPQDPFIFSGSIRLNLDPFDQFTDNEIWEALSKVKLKKMVSTMPMKLESLVQGGDGLTIGNKQLLCLCRAILRNSKIVLFDEATNSIDFQTTRLIKQTIEENFKDCTILTIAHNIDTILDSDKIAIIDEGELIEFDTPLNLIKDSTSRFSKLIKLNNNQKNKLN</sequence>
<evidence type="ECO:0000255" key="1">
    <source>
        <dbReference type="PROSITE-ProRule" id="PRU00434"/>
    </source>
</evidence>
<evidence type="ECO:0000255" key="2">
    <source>
        <dbReference type="PROSITE-ProRule" id="PRU00441"/>
    </source>
</evidence>
<evidence type="ECO:0000305" key="3"/>
<name>ABCCF_DICDI</name>
<dbReference type="EMBL" id="AAFI02000036">
    <property type="protein sequence ID" value="EAL67208.1"/>
    <property type="molecule type" value="Genomic_DNA"/>
</dbReference>
<dbReference type="RefSeq" id="XP_641188.1">
    <property type="nucleotide sequence ID" value="XM_636096.1"/>
</dbReference>
<dbReference type="SMR" id="Q54VC1"/>
<dbReference type="FunCoup" id="Q54VC1">
    <property type="interactions" value="16"/>
</dbReference>
<dbReference type="STRING" id="44689.Q54VC1"/>
<dbReference type="PaxDb" id="44689-DDB0216384"/>
<dbReference type="EnsemblProtists" id="EAL67208">
    <property type="protein sequence ID" value="EAL67208"/>
    <property type="gene ID" value="DDB_G0280459"/>
</dbReference>
<dbReference type="GeneID" id="8622569"/>
<dbReference type="KEGG" id="ddi:DDB_G0280459"/>
<dbReference type="dictyBase" id="DDB_G0280459">
    <property type="gene designation" value="abcC15"/>
</dbReference>
<dbReference type="VEuPathDB" id="AmoebaDB:DDB_G0280459"/>
<dbReference type="eggNOG" id="KOG0054">
    <property type="taxonomic scope" value="Eukaryota"/>
</dbReference>
<dbReference type="HOGENOM" id="CLU_000604_27_3_1"/>
<dbReference type="InParanoid" id="Q54VC1"/>
<dbReference type="PhylomeDB" id="Q54VC1"/>
<dbReference type="Reactome" id="R-DDI-114608">
    <property type="pathway name" value="Platelet degranulation"/>
</dbReference>
<dbReference type="Reactome" id="R-DDI-382556">
    <property type="pathway name" value="ABC-family proteins mediated transport"/>
</dbReference>
<dbReference type="Reactome" id="R-DDI-8856825">
    <property type="pathway name" value="Cargo recognition for clathrin-mediated endocytosis"/>
</dbReference>
<dbReference type="Reactome" id="R-DDI-8856828">
    <property type="pathway name" value="Clathrin-mediated endocytosis"/>
</dbReference>
<dbReference type="Reactome" id="R-DDI-9646399">
    <property type="pathway name" value="Aggrephagy"/>
</dbReference>
<dbReference type="Reactome" id="R-DDI-9748787">
    <property type="pathway name" value="Azathioprine ADME"/>
</dbReference>
<dbReference type="Reactome" id="R-DDI-9753281">
    <property type="pathway name" value="Paracetamol ADME"/>
</dbReference>
<dbReference type="PRO" id="PR:Q54VC1"/>
<dbReference type="Proteomes" id="UP000002195">
    <property type="component" value="Chromosome 3"/>
</dbReference>
<dbReference type="GO" id="GO:0016020">
    <property type="term" value="C:membrane"/>
    <property type="evidence" value="ECO:0000318"/>
    <property type="project" value="GO_Central"/>
</dbReference>
<dbReference type="GO" id="GO:0140359">
    <property type="term" value="F:ABC-type transporter activity"/>
    <property type="evidence" value="ECO:0007669"/>
    <property type="project" value="InterPro"/>
</dbReference>
<dbReference type="GO" id="GO:0005524">
    <property type="term" value="F:ATP binding"/>
    <property type="evidence" value="ECO:0007669"/>
    <property type="project" value="UniProtKB-KW"/>
</dbReference>
<dbReference type="GO" id="GO:0016887">
    <property type="term" value="F:ATP hydrolysis activity"/>
    <property type="evidence" value="ECO:0007669"/>
    <property type="project" value="InterPro"/>
</dbReference>
<dbReference type="GO" id="GO:0042626">
    <property type="term" value="F:ATPase-coupled transmembrane transporter activity"/>
    <property type="evidence" value="ECO:0000318"/>
    <property type="project" value="GO_Central"/>
</dbReference>
<dbReference type="GO" id="GO:0030587">
    <property type="term" value="P:sorocarp development"/>
    <property type="evidence" value="ECO:0007669"/>
    <property type="project" value="UniProtKB-ARBA"/>
</dbReference>
<dbReference type="GO" id="GO:0055085">
    <property type="term" value="P:transmembrane transport"/>
    <property type="evidence" value="ECO:0000318"/>
    <property type="project" value="GO_Central"/>
</dbReference>
<dbReference type="CDD" id="cd18579">
    <property type="entry name" value="ABC_6TM_ABCC_D1"/>
    <property type="match status" value="1"/>
</dbReference>
<dbReference type="CDD" id="cd18580">
    <property type="entry name" value="ABC_6TM_ABCC_D2"/>
    <property type="match status" value="1"/>
</dbReference>
<dbReference type="CDD" id="cd03250">
    <property type="entry name" value="ABCC_MRP_domain1"/>
    <property type="match status" value="1"/>
</dbReference>
<dbReference type="CDD" id="cd03244">
    <property type="entry name" value="ABCC_MRP_domain2"/>
    <property type="match status" value="1"/>
</dbReference>
<dbReference type="FunFam" id="1.20.1560.10:FF:000080">
    <property type="entry name" value="ABC transporter C family member 1"/>
    <property type="match status" value="1"/>
</dbReference>
<dbReference type="FunFam" id="1.20.1560.10:FF:000010">
    <property type="entry name" value="Multidrug resistance-associated ABC transporter"/>
    <property type="match status" value="1"/>
</dbReference>
<dbReference type="FunFam" id="3.40.50.300:FF:000610">
    <property type="entry name" value="Multidrug resistance-associated ABC transporter"/>
    <property type="match status" value="1"/>
</dbReference>
<dbReference type="Gene3D" id="1.20.1560.10">
    <property type="entry name" value="ABC transporter type 1, transmembrane domain"/>
    <property type="match status" value="2"/>
</dbReference>
<dbReference type="Gene3D" id="3.40.50.300">
    <property type="entry name" value="P-loop containing nucleotide triphosphate hydrolases"/>
    <property type="match status" value="2"/>
</dbReference>
<dbReference type="InterPro" id="IPR003593">
    <property type="entry name" value="AAA+_ATPase"/>
</dbReference>
<dbReference type="InterPro" id="IPR011527">
    <property type="entry name" value="ABC1_TM_dom"/>
</dbReference>
<dbReference type="InterPro" id="IPR036640">
    <property type="entry name" value="ABC1_TM_sf"/>
</dbReference>
<dbReference type="InterPro" id="IPR003439">
    <property type="entry name" value="ABC_transporter-like_ATP-bd"/>
</dbReference>
<dbReference type="InterPro" id="IPR050173">
    <property type="entry name" value="ABC_transporter_C-like"/>
</dbReference>
<dbReference type="InterPro" id="IPR044746">
    <property type="entry name" value="ABCC_6TM_D1"/>
</dbReference>
<dbReference type="InterPro" id="IPR044726">
    <property type="entry name" value="ABCC_6TM_D2"/>
</dbReference>
<dbReference type="InterPro" id="IPR027417">
    <property type="entry name" value="P-loop_NTPase"/>
</dbReference>
<dbReference type="PANTHER" id="PTHR24223:SF172">
    <property type="entry name" value="ABC TRANSPORTER C FAMILY MEMBER 1-RELATED"/>
    <property type="match status" value="1"/>
</dbReference>
<dbReference type="PANTHER" id="PTHR24223">
    <property type="entry name" value="ATP-BINDING CASSETTE SUB-FAMILY C"/>
    <property type="match status" value="1"/>
</dbReference>
<dbReference type="Pfam" id="PF00664">
    <property type="entry name" value="ABC_membrane"/>
    <property type="match status" value="2"/>
</dbReference>
<dbReference type="Pfam" id="PF00005">
    <property type="entry name" value="ABC_tran"/>
    <property type="match status" value="2"/>
</dbReference>
<dbReference type="SMART" id="SM00382">
    <property type="entry name" value="AAA"/>
    <property type="match status" value="2"/>
</dbReference>
<dbReference type="SUPFAM" id="SSF90123">
    <property type="entry name" value="ABC transporter transmembrane region"/>
    <property type="match status" value="2"/>
</dbReference>
<dbReference type="SUPFAM" id="SSF52540">
    <property type="entry name" value="P-loop containing nucleoside triphosphate hydrolases"/>
    <property type="match status" value="2"/>
</dbReference>
<dbReference type="PROSITE" id="PS50929">
    <property type="entry name" value="ABC_TM1F"/>
    <property type="match status" value="2"/>
</dbReference>
<dbReference type="PROSITE" id="PS50893">
    <property type="entry name" value="ABC_TRANSPORTER_2"/>
    <property type="match status" value="2"/>
</dbReference>
<protein>
    <recommendedName>
        <fullName>ABC transporter C family member 15</fullName>
    </recommendedName>
    <alternativeName>
        <fullName>ABC transporter ABCC.15</fullName>
    </alternativeName>
</protein>
<feature type="chain" id="PRO_0000363859" description="ABC transporter C family member 15">
    <location>
        <begin position="1"/>
        <end position="1436"/>
    </location>
</feature>
<feature type="transmembrane region" description="Helical" evidence="2">
    <location>
        <begin position="8"/>
        <end position="28"/>
    </location>
</feature>
<feature type="transmembrane region" description="Helical" evidence="2">
    <location>
        <begin position="129"/>
        <end position="149"/>
    </location>
</feature>
<feature type="transmembrane region" description="Helical" evidence="2">
    <location>
        <begin position="165"/>
        <end position="185"/>
    </location>
</feature>
<feature type="transmembrane region" description="Helical" evidence="2">
    <location>
        <begin position="238"/>
        <end position="258"/>
    </location>
</feature>
<feature type="transmembrane region" description="Helical" evidence="2">
    <location>
        <begin position="261"/>
        <end position="281"/>
    </location>
</feature>
<feature type="transmembrane region" description="Helical" evidence="2">
    <location>
        <begin position="349"/>
        <end position="369"/>
    </location>
</feature>
<feature type="transmembrane region" description="Helical" evidence="2">
    <location>
        <begin position="373"/>
        <end position="393"/>
    </location>
</feature>
<feature type="transmembrane region" description="Helical" evidence="2">
    <location>
        <begin position="873"/>
        <end position="893"/>
    </location>
</feature>
<feature type="transmembrane region" description="Helical" evidence="2">
    <location>
        <begin position="919"/>
        <end position="939"/>
    </location>
</feature>
<feature type="transmembrane region" description="Helical" evidence="2">
    <location>
        <begin position="985"/>
        <end position="1005"/>
    </location>
</feature>
<feature type="transmembrane region" description="Helical" evidence="2">
    <location>
        <begin position="1017"/>
        <end position="1039"/>
    </location>
</feature>
<feature type="transmembrane region" description="Helical" evidence="2">
    <location>
        <begin position="1101"/>
        <end position="1121"/>
    </location>
</feature>
<feature type="transmembrane region" description="Helical" evidence="2">
    <location>
        <begin position="1127"/>
        <end position="1147"/>
    </location>
</feature>
<feature type="domain" description="ABC transmembrane type-1 1" evidence="2">
    <location>
        <begin position="128"/>
        <end position="412"/>
    </location>
</feature>
<feature type="domain" description="ABC transporter 1" evidence="1">
    <location>
        <begin position="543"/>
        <end position="766"/>
    </location>
</feature>
<feature type="domain" description="ABC transmembrane type-1 2" evidence="2">
    <location>
        <begin position="865"/>
        <end position="1155"/>
    </location>
</feature>
<feature type="domain" description="ABC transporter 2" evidence="1">
    <location>
        <begin position="1193"/>
        <end position="1426"/>
    </location>
</feature>
<feature type="binding site" evidence="1">
    <location>
        <begin position="575"/>
        <end position="582"/>
    </location>
    <ligand>
        <name>ATP</name>
        <dbReference type="ChEBI" id="CHEBI:30616"/>
    </ligand>
</feature>
<feature type="binding site" evidence="1">
    <location>
        <begin position="1227"/>
        <end position="1234"/>
    </location>
    <ligand>
        <name>ATP</name>
        <dbReference type="ChEBI" id="CHEBI:30616"/>
    </ligand>
</feature>
<comment type="subcellular location">
    <subcellularLocation>
        <location evidence="2">Membrane</location>
        <topology evidence="2">Multi-pass membrane protein</topology>
    </subcellularLocation>
</comment>
<comment type="similarity">
    <text evidence="3">Belongs to the ABC transporter superfamily. ABCC family. Conjugate transporter (TC 3.A.1.208) subfamily.</text>
</comment>
<accession>Q54VC1</accession>
<proteinExistence type="inferred from homology"/>
<organism>
    <name type="scientific">Dictyostelium discoideum</name>
    <name type="common">Social amoeba</name>
    <dbReference type="NCBI Taxonomy" id="44689"/>
    <lineage>
        <taxon>Eukaryota</taxon>
        <taxon>Amoebozoa</taxon>
        <taxon>Evosea</taxon>
        <taxon>Eumycetozoa</taxon>
        <taxon>Dictyostelia</taxon>
        <taxon>Dictyosteliales</taxon>
        <taxon>Dictyosteliaceae</taxon>
        <taxon>Dictyostelium</taxon>
    </lineage>
</organism>
<reference key="1">
    <citation type="journal article" date="2005" name="Nature">
        <title>The genome of the social amoeba Dictyostelium discoideum.</title>
        <authorList>
            <person name="Eichinger L."/>
            <person name="Pachebat J.A."/>
            <person name="Gloeckner G."/>
            <person name="Rajandream M.A."/>
            <person name="Sucgang R."/>
            <person name="Berriman M."/>
            <person name="Song J."/>
            <person name="Olsen R."/>
            <person name="Szafranski K."/>
            <person name="Xu Q."/>
            <person name="Tunggal B."/>
            <person name="Kummerfeld S."/>
            <person name="Madera M."/>
            <person name="Konfortov B.A."/>
            <person name="Rivero F."/>
            <person name="Bankier A.T."/>
            <person name="Lehmann R."/>
            <person name="Hamlin N."/>
            <person name="Davies R."/>
            <person name="Gaudet P."/>
            <person name="Fey P."/>
            <person name="Pilcher K."/>
            <person name="Chen G."/>
            <person name="Saunders D."/>
            <person name="Sodergren E.J."/>
            <person name="Davis P."/>
            <person name="Kerhornou A."/>
            <person name="Nie X."/>
            <person name="Hall N."/>
            <person name="Anjard C."/>
            <person name="Hemphill L."/>
            <person name="Bason N."/>
            <person name="Farbrother P."/>
            <person name="Desany B."/>
            <person name="Just E."/>
            <person name="Morio T."/>
            <person name="Rost R."/>
            <person name="Churcher C.M."/>
            <person name="Cooper J."/>
            <person name="Haydock S."/>
            <person name="van Driessche N."/>
            <person name="Cronin A."/>
            <person name="Goodhead I."/>
            <person name="Muzny D.M."/>
            <person name="Mourier T."/>
            <person name="Pain A."/>
            <person name="Lu M."/>
            <person name="Harper D."/>
            <person name="Lindsay R."/>
            <person name="Hauser H."/>
            <person name="James K.D."/>
            <person name="Quiles M."/>
            <person name="Madan Babu M."/>
            <person name="Saito T."/>
            <person name="Buchrieser C."/>
            <person name="Wardroper A."/>
            <person name="Felder M."/>
            <person name="Thangavelu M."/>
            <person name="Johnson D."/>
            <person name="Knights A."/>
            <person name="Loulseged H."/>
            <person name="Mungall K.L."/>
            <person name="Oliver K."/>
            <person name="Price C."/>
            <person name="Quail M.A."/>
            <person name="Urushihara H."/>
            <person name="Hernandez J."/>
            <person name="Rabbinowitsch E."/>
            <person name="Steffen D."/>
            <person name="Sanders M."/>
            <person name="Ma J."/>
            <person name="Kohara Y."/>
            <person name="Sharp S."/>
            <person name="Simmonds M.N."/>
            <person name="Spiegler S."/>
            <person name="Tivey A."/>
            <person name="Sugano S."/>
            <person name="White B."/>
            <person name="Walker D."/>
            <person name="Woodward J.R."/>
            <person name="Winckler T."/>
            <person name="Tanaka Y."/>
            <person name="Shaulsky G."/>
            <person name="Schleicher M."/>
            <person name="Weinstock G.M."/>
            <person name="Rosenthal A."/>
            <person name="Cox E.C."/>
            <person name="Chisholm R.L."/>
            <person name="Gibbs R.A."/>
            <person name="Loomis W.F."/>
            <person name="Platzer M."/>
            <person name="Kay R.R."/>
            <person name="Williams J.G."/>
            <person name="Dear P.H."/>
            <person name="Noegel A.A."/>
            <person name="Barrell B.G."/>
            <person name="Kuspa A."/>
        </authorList>
    </citation>
    <scope>NUCLEOTIDE SEQUENCE [LARGE SCALE GENOMIC DNA]</scope>
    <source>
        <strain>AX4</strain>
    </source>
</reference>